<gene>
    <name evidence="1" type="primary">rplQ</name>
    <name type="ordered locus">Nmul_A0793</name>
</gene>
<name>RL17_NITMU</name>
<comment type="subunit">
    <text evidence="1">Part of the 50S ribosomal subunit. Contacts protein L32.</text>
</comment>
<comment type="similarity">
    <text evidence="1">Belongs to the bacterial ribosomal protein bL17 family.</text>
</comment>
<proteinExistence type="inferred from homology"/>
<organism>
    <name type="scientific">Nitrosospira multiformis (strain ATCC 25196 / NCIMB 11849 / C 71)</name>
    <dbReference type="NCBI Taxonomy" id="323848"/>
    <lineage>
        <taxon>Bacteria</taxon>
        <taxon>Pseudomonadati</taxon>
        <taxon>Pseudomonadota</taxon>
        <taxon>Betaproteobacteria</taxon>
        <taxon>Nitrosomonadales</taxon>
        <taxon>Nitrosomonadaceae</taxon>
        <taxon>Nitrosospira</taxon>
    </lineage>
</organism>
<sequence length="131" mass="15096">MRHHNGLRKLNRTSSHRSAMLRNMTNSLLRHEVIKTTLPKAKELRRVIEPMITLGKKPSLANRRLAFDRLRDRDMVGKLFSELGPRYQTRNGGYLRILKFGFRKGDNAPMALVELMDRPEQPATDTESKAG</sequence>
<evidence type="ECO:0000255" key="1">
    <source>
        <dbReference type="HAMAP-Rule" id="MF_01368"/>
    </source>
</evidence>
<evidence type="ECO:0000305" key="2"/>
<keyword id="KW-1185">Reference proteome</keyword>
<keyword id="KW-0687">Ribonucleoprotein</keyword>
<keyword id="KW-0689">Ribosomal protein</keyword>
<dbReference type="EMBL" id="CP000103">
    <property type="protein sequence ID" value="ABB74100.1"/>
    <property type="molecule type" value="Genomic_DNA"/>
</dbReference>
<dbReference type="RefSeq" id="WP_011380149.1">
    <property type="nucleotide sequence ID" value="NC_007614.1"/>
</dbReference>
<dbReference type="SMR" id="Q2YAX1"/>
<dbReference type="STRING" id="323848.Nmul_A0793"/>
<dbReference type="KEGG" id="nmu:Nmul_A0793"/>
<dbReference type="eggNOG" id="COG0203">
    <property type="taxonomic scope" value="Bacteria"/>
</dbReference>
<dbReference type="HOGENOM" id="CLU_074407_2_0_4"/>
<dbReference type="OrthoDB" id="9809073at2"/>
<dbReference type="Proteomes" id="UP000002718">
    <property type="component" value="Chromosome"/>
</dbReference>
<dbReference type="GO" id="GO:0022625">
    <property type="term" value="C:cytosolic large ribosomal subunit"/>
    <property type="evidence" value="ECO:0007669"/>
    <property type="project" value="TreeGrafter"/>
</dbReference>
<dbReference type="GO" id="GO:0003735">
    <property type="term" value="F:structural constituent of ribosome"/>
    <property type="evidence" value="ECO:0007669"/>
    <property type="project" value="InterPro"/>
</dbReference>
<dbReference type="GO" id="GO:0006412">
    <property type="term" value="P:translation"/>
    <property type="evidence" value="ECO:0007669"/>
    <property type="project" value="UniProtKB-UniRule"/>
</dbReference>
<dbReference type="FunFam" id="3.90.1030.10:FF:000001">
    <property type="entry name" value="50S ribosomal protein L17"/>
    <property type="match status" value="1"/>
</dbReference>
<dbReference type="Gene3D" id="3.90.1030.10">
    <property type="entry name" value="Ribosomal protein L17"/>
    <property type="match status" value="1"/>
</dbReference>
<dbReference type="HAMAP" id="MF_01368">
    <property type="entry name" value="Ribosomal_bL17"/>
    <property type="match status" value="1"/>
</dbReference>
<dbReference type="InterPro" id="IPR000456">
    <property type="entry name" value="Ribosomal_bL17"/>
</dbReference>
<dbReference type="InterPro" id="IPR047859">
    <property type="entry name" value="Ribosomal_bL17_CS"/>
</dbReference>
<dbReference type="InterPro" id="IPR036373">
    <property type="entry name" value="Ribosomal_bL17_sf"/>
</dbReference>
<dbReference type="NCBIfam" id="TIGR00059">
    <property type="entry name" value="L17"/>
    <property type="match status" value="1"/>
</dbReference>
<dbReference type="PANTHER" id="PTHR14413:SF16">
    <property type="entry name" value="LARGE RIBOSOMAL SUBUNIT PROTEIN BL17M"/>
    <property type="match status" value="1"/>
</dbReference>
<dbReference type="PANTHER" id="PTHR14413">
    <property type="entry name" value="RIBOSOMAL PROTEIN L17"/>
    <property type="match status" value="1"/>
</dbReference>
<dbReference type="Pfam" id="PF01196">
    <property type="entry name" value="Ribosomal_L17"/>
    <property type="match status" value="1"/>
</dbReference>
<dbReference type="SUPFAM" id="SSF64263">
    <property type="entry name" value="Prokaryotic ribosomal protein L17"/>
    <property type="match status" value="1"/>
</dbReference>
<dbReference type="PROSITE" id="PS01167">
    <property type="entry name" value="RIBOSOMAL_L17"/>
    <property type="match status" value="1"/>
</dbReference>
<reference key="1">
    <citation type="submission" date="2005-08" db="EMBL/GenBank/DDBJ databases">
        <title>Complete sequence of chromosome 1 of Nitrosospira multiformis ATCC 25196.</title>
        <authorList>
            <person name="Copeland A."/>
            <person name="Lucas S."/>
            <person name="Lapidus A."/>
            <person name="Barry K."/>
            <person name="Detter J.C."/>
            <person name="Glavina T."/>
            <person name="Hammon N."/>
            <person name="Israni S."/>
            <person name="Pitluck S."/>
            <person name="Chain P."/>
            <person name="Malfatti S."/>
            <person name="Shin M."/>
            <person name="Vergez L."/>
            <person name="Schmutz J."/>
            <person name="Larimer F."/>
            <person name="Land M."/>
            <person name="Hauser L."/>
            <person name="Kyrpides N."/>
            <person name="Lykidis A."/>
            <person name="Richardson P."/>
        </authorList>
    </citation>
    <scope>NUCLEOTIDE SEQUENCE [LARGE SCALE GENOMIC DNA]</scope>
    <source>
        <strain>ATCC 25196 / NCIMB 11849 / C 71</strain>
    </source>
</reference>
<accession>Q2YAX1</accession>
<protein>
    <recommendedName>
        <fullName evidence="1">Large ribosomal subunit protein bL17</fullName>
    </recommendedName>
    <alternativeName>
        <fullName evidence="2">50S ribosomal protein L17</fullName>
    </alternativeName>
</protein>
<feature type="chain" id="PRO_0000267904" description="Large ribosomal subunit protein bL17">
    <location>
        <begin position="1"/>
        <end position="131"/>
    </location>
</feature>